<keyword id="KW-0066">ATP synthesis</keyword>
<keyword id="KW-0067">ATP-binding</keyword>
<keyword id="KW-0139">CF(1)</keyword>
<keyword id="KW-0150">Chloroplast</keyword>
<keyword id="KW-0375">Hydrogen ion transport</keyword>
<keyword id="KW-0406">Ion transport</keyword>
<keyword id="KW-0472">Membrane</keyword>
<keyword id="KW-0547">Nucleotide-binding</keyword>
<keyword id="KW-0934">Plastid</keyword>
<keyword id="KW-0793">Thylakoid</keyword>
<keyword id="KW-1278">Translocase</keyword>
<keyword id="KW-0813">Transport</keyword>
<organism>
    <name type="scientific">Ipomoea quamoclit</name>
    <name type="common">Cypress vine</name>
    <name type="synonym">Convolvulus pennatus</name>
    <dbReference type="NCBI Taxonomy" id="89660"/>
    <lineage>
        <taxon>Eukaryota</taxon>
        <taxon>Viridiplantae</taxon>
        <taxon>Streptophyta</taxon>
        <taxon>Embryophyta</taxon>
        <taxon>Tracheophyta</taxon>
        <taxon>Spermatophyta</taxon>
        <taxon>Magnoliopsida</taxon>
        <taxon>eudicotyledons</taxon>
        <taxon>Gunneridae</taxon>
        <taxon>Pentapetalae</taxon>
        <taxon>asterids</taxon>
        <taxon>lamiids</taxon>
        <taxon>Solanales</taxon>
        <taxon>Convolvulaceae</taxon>
        <taxon>Ipomoeeae</taxon>
        <taxon>Ipomoea</taxon>
    </lineage>
</organism>
<protein>
    <recommendedName>
        <fullName evidence="1">ATP synthase subunit beta, chloroplastic</fullName>
        <ecNumber evidence="1">7.1.2.2</ecNumber>
    </recommendedName>
    <alternativeName>
        <fullName evidence="1">ATP synthase F1 sector subunit beta</fullName>
    </alternativeName>
    <alternativeName>
        <fullName evidence="1">F-ATPase subunit beta</fullName>
    </alternativeName>
</protein>
<dbReference type="EC" id="7.1.2.2" evidence="1"/>
<dbReference type="EMBL" id="AY100747">
    <property type="protein sequence ID" value="AAM52101.1"/>
    <property type="molecule type" value="Genomic_DNA"/>
</dbReference>
<dbReference type="RefSeq" id="YP_009663403.1">
    <property type="nucleotide sequence ID" value="NC_042941.1"/>
</dbReference>
<dbReference type="SMR" id="Q8MBQ3"/>
<dbReference type="GeneID" id="40491626"/>
<dbReference type="GO" id="GO:0009535">
    <property type="term" value="C:chloroplast thylakoid membrane"/>
    <property type="evidence" value="ECO:0007669"/>
    <property type="project" value="UniProtKB-SubCell"/>
</dbReference>
<dbReference type="GO" id="GO:0005739">
    <property type="term" value="C:mitochondrion"/>
    <property type="evidence" value="ECO:0007669"/>
    <property type="project" value="GOC"/>
</dbReference>
<dbReference type="GO" id="GO:0045259">
    <property type="term" value="C:proton-transporting ATP synthase complex"/>
    <property type="evidence" value="ECO:0007669"/>
    <property type="project" value="UniProtKB-KW"/>
</dbReference>
<dbReference type="GO" id="GO:0005524">
    <property type="term" value="F:ATP binding"/>
    <property type="evidence" value="ECO:0007669"/>
    <property type="project" value="UniProtKB-UniRule"/>
</dbReference>
<dbReference type="GO" id="GO:0016887">
    <property type="term" value="F:ATP hydrolysis activity"/>
    <property type="evidence" value="ECO:0007669"/>
    <property type="project" value="InterPro"/>
</dbReference>
<dbReference type="GO" id="GO:0046933">
    <property type="term" value="F:proton-transporting ATP synthase activity, rotational mechanism"/>
    <property type="evidence" value="ECO:0007669"/>
    <property type="project" value="UniProtKB-UniRule"/>
</dbReference>
<dbReference type="GO" id="GO:0042776">
    <property type="term" value="P:proton motive force-driven mitochondrial ATP synthesis"/>
    <property type="evidence" value="ECO:0007669"/>
    <property type="project" value="TreeGrafter"/>
</dbReference>
<dbReference type="CDD" id="cd18110">
    <property type="entry name" value="ATP-synt_F1_beta_C"/>
    <property type="match status" value="1"/>
</dbReference>
<dbReference type="CDD" id="cd18115">
    <property type="entry name" value="ATP-synt_F1_beta_N"/>
    <property type="match status" value="1"/>
</dbReference>
<dbReference type="CDD" id="cd01133">
    <property type="entry name" value="F1-ATPase_beta_CD"/>
    <property type="match status" value="1"/>
</dbReference>
<dbReference type="FunFam" id="1.10.1140.10:FF:000001">
    <property type="entry name" value="ATP synthase subunit beta"/>
    <property type="match status" value="1"/>
</dbReference>
<dbReference type="FunFam" id="3.40.50.12240:FF:000006">
    <property type="entry name" value="ATP synthase subunit beta"/>
    <property type="match status" value="1"/>
</dbReference>
<dbReference type="FunFam" id="3.40.50.300:FF:000004">
    <property type="entry name" value="ATP synthase subunit beta"/>
    <property type="match status" value="1"/>
</dbReference>
<dbReference type="FunFam" id="2.40.10.170:FF:000002">
    <property type="entry name" value="ATP synthase subunit beta, chloroplastic"/>
    <property type="match status" value="1"/>
</dbReference>
<dbReference type="Gene3D" id="2.40.10.170">
    <property type="match status" value="1"/>
</dbReference>
<dbReference type="Gene3D" id="1.10.1140.10">
    <property type="entry name" value="Bovine Mitochondrial F1-atpase, Atp Synthase Beta Chain, Chain D, domain 3"/>
    <property type="match status" value="1"/>
</dbReference>
<dbReference type="Gene3D" id="3.40.50.300">
    <property type="entry name" value="P-loop containing nucleotide triphosphate hydrolases"/>
    <property type="match status" value="1"/>
</dbReference>
<dbReference type="HAMAP" id="MF_01347">
    <property type="entry name" value="ATP_synth_beta_bact"/>
    <property type="match status" value="1"/>
</dbReference>
<dbReference type="InterPro" id="IPR003593">
    <property type="entry name" value="AAA+_ATPase"/>
</dbReference>
<dbReference type="InterPro" id="IPR055190">
    <property type="entry name" value="ATP-synt_VA_C"/>
</dbReference>
<dbReference type="InterPro" id="IPR005722">
    <property type="entry name" value="ATP_synth_F1_bsu"/>
</dbReference>
<dbReference type="InterPro" id="IPR020003">
    <property type="entry name" value="ATPase_a/bsu_AS"/>
</dbReference>
<dbReference type="InterPro" id="IPR050053">
    <property type="entry name" value="ATPase_alpha/beta_chains"/>
</dbReference>
<dbReference type="InterPro" id="IPR004100">
    <property type="entry name" value="ATPase_F1/V1/A1_a/bsu_N"/>
</dbReference>
<dbReference type="InterPro" id="IPR036121">
    <property type="entry name" value="ATPase_F1/V1/A1_a/bsu_N_sf"/>
</dbReference>
<dbReference type="InterPro" id="IPR000194">
    <property type="entry name" value="ATPase_F1/V1/A1_a/bsu_nucl-bd"/>
</dbReference>
<dbReference type="InterPro" id="IPR024034">
    <property type="entry name" value="ATPase_F1/V1_b/a_C"/>
</dbReference>
<dbReference type="InterPro" id="IPR027417">
    <property type="entry name" value="P-loop_NTPase"/>
</dbReference>
<dbReference type="NCBIfam" id="TIGR01039">
    <property type="entry name" value="atpD"/>
    <property type="match status" value="1"/>
</dbReference>
<dbReference type="PANTHER" id="PTHR15184">
    <property type="entry name" value="ATP SYNTHASE"/>
    <property type="match status" value="1"/>
</dbReference>
<dbReference type="PANTHER" id="PTHR15184:SF71">
    <property type="entry name" value="ATP SYNTHASE SUBUNIT BETA, MITOCHONDRIAL"/>
    <property type="match status" value="1"/>
</dbReference>
<dbReference type="Pfam" id="PF00006">
    <property type="entry name" value="ATP-synt_ab"/>
    <property type="match status" value="1"/>
</dbReference>
<dbReference type="Pfam" id="PF02874">
    <property type="entry name" value="ATP-synt_ab_N"/>
    <property type="match status" value="1"/>
</dbReference>
<dbReference type="Pfam" id="PF22919">
    <property type="entry name" value="ATP-synt_VA_C"/>
    <property type="match status" value="1"/>
</dbReference>
<dbReference type="SMART" id="SM00382">
    <property type="entry name" value="AAA"/>
    <property type="match status" value="1"/>
</dbReference>
<dbReference type="SUPFAM" id="SSF47917">
    <property type="entry name" value="C-terminal domain of alpha and beta subunits of F1 ATP synthase"/>
    <property type="match status" value="1"/>
</dbReference>
<dbReference type="SUPFAM" id="SSF50615">
    <property type="entry name" value="N-terminal domain of alpha and beta subunits of F1 ATP synthase"/>
    <property type="match status" value="1"/>
</dbReference>
<dbReference type="SUPFAM" id="SSF52540">
    <property type="entry name" value="P-loop containing nucleoside triphosphate hydrolases"/>
    <property type="match status" value="1"/>
</dbReference>
<dbReference type="PROSITE" id="PS00152">
    <property type="entry name" value="ATPASE_ALPHA_BETA"/>
    <property type="match status" value="1"/>
</dbReference>
<gene>
    <name evidence="1" type="primary">atpB</name>
</gene>
<feature type="chain" id="PRO_0000254489" description="ATP synthase subunit beta, chloroplastic">
    <location>
        <begin position="1"/>
        <end position="490"/>
    </location>
</feature>
<feature type="binding site" evidence="1">
    <location>
        <begin position="170"/>
        <end position="177"/>
    </location>
    <ligand>
        <name>ATP</name>
        <dbReference type="ChEBI" id="CHEBI:30616"/>
    </ligand>
</feature>
<accession>Q8MBQ3</accession>
<evidence type="ECO:0000255" key="1">
    <source>
        <dbReference type="HAMAP-Rule" id="MF_01347"/>
    </source>
</evidence>
<name>ATPB_IPOQU</name>
<sequence length="490" mass="52885">MRINPTTSGSEVSAVEKKNLGRIVKIIGPVLDVAFPPGKMPNIYNALVVQGRDNEQTNVTCEVQQLLGNNRVRAVAMSDTDGLMRGMEVIDTGAPISVPVGGSTLGRIFNVLGQPVDNLGPVDTNTTSPIHRSAPAFIQLDTKLSIFETGIKVVDLLAPYRRGGKIGLFGGAGVGKTVLIMELINNIAKAHGGVSVFGGVGERTREGNDLYLEMKESGVINEENIPESKVALVYGQMNEPPGARMRVGLTALTMAEYFRDVNEQDVLLFIDNIFRFVQAGSEVSALLGRMPSAVGYQPTLSTEMGSLQERITSTKEGSITSIQAVYVPADDLTDPAPATTFAHLDATTVLSRGLAAKGIYPAVDPLDSTSTMLQPRIVGEEHYETAQRVKQTLQRYKELQDIIAILGLDELSEEDRLTVARARKIERFLSQPFFVAEVFTGSPGKYVGLAETIRGFQLILSGELDGLPEQAFYLVGNIDEATAKAMNLKT</sequence>
<geneLocation type="chloroplast"/>
<proteinExistence type="inferred from homology"/>
<reference key="1">
    <citation type="journal article" date="2002" name="Am. J. Bot.">
        <title>Monophyly of the Convolvulaceae and circumscription of their major lineages based on DNA sequences of multiple chloroplast loci.</title>
        <authorList>
            <person name="Stefanovic S."/>
            <person name="Krueger L."/>
            <person name="Olmstead R.G."/>
        </authorList>
        <dbReference type="AGRICOLA" id="IND23320510"/>
    </citation>
    <scope>NUCLEOTIDE SEQUENCE [GENOMIC DNA]</scope>
</reference>
<comment type="function">
    <text evidence="1">Produces ATP from ADP in the presence of a proton gradient across the membrane. The catalytic sites are hosted primarily by the beta subunits.</text>
</comment>
<comment type="catalytic activity">
    <reaction evidence="1">
        <text>ATP + H2O + 4 H(+)(in) = ADP + phosphate + 5 H(+)(out)</text>
        <dbReference type="Rhea" id="RHEA:57720"/>
        <dbReference type="ChEBI" id="CHEBI:15377"/>
        <dbReference type="ChEBI" id="CHEBI:15378"/>
        <dbReference type="ChEBI" id="CHEBI:30616"/>
        <dbReference type="ChEBI" id="CHEBI:43474"/>
        <dbReference type="ChEBI" id="CHEBI:456216"/>
        <dbReference type="EC" id="7.1.2.2"/>
    </reaction>
</comment>
<comment type="subunit">
    <text evidence="1">F-type ATPases have 2 components, CF(1) - the catalytic core - and CF(0) - the membrane proton channel. CF(1) has five subunits: alpha(3), beta(3), gamma(1), delta(1), epsilon(1). CF(0) has four main subunits: a(1), b(1), b'(1) and c(9-12).</text>
</comment>
<comment type="subcellular location">
    <subcellularLocation>
        <location evidence="1">Plastid</location>
        <location evidence="1">Chloroplast thylakoid membrane</location>
        <topology evidence="1">Peripheral membrane protein</topology>
    </subcellularLocation>
</comment>
<comment type="similarity">
    <text evidence="1">Belongs to the ATPase alpha/beta chains family.</text>
</comment>